<comment type="function">
    <text evidence="2 3">Catalyzes the methyl esterification of L-isoaspartyl residues in peptides and proteins that result from spontaneous decomposition of normal L-aspartyl and L-asparaginyl residues. It plays a role in the repair and/or degradation of damaged proteins.</text>
</comment>
<comment type="catalytic activity">
    <reaction evidence="2">
        <text>[protein]-L-isoaspartate + S-adenosyl-L-methionine = [protein]-L-isoaspartate alpha-methyl ester + S-adenosyl-L-homocysteine</text>
        <dbReference type="Rhea" id="RHEA:12705"/>
        <dbReference type="Rhea" id="RHEA-COMP:12143"/>
        <dbReference type="Rhea" id="RHEA-COMP:12144"/>
        <dbReference type="ChEBI" id="CHEBI:57856"/>
        <dbReference type="ChEBI" id="CHEBI:59789"/>
        <dbReference type="ChEBI" id="CHEBI:90596"/>
        <dbReference type="ChEBI" id="CHEBI:90598"/>
        <dbReference type="EC" id="2.1.1.77"/>
    </reaction>
</comment>
<comment type="biophysicochemical properties">
    <phDependence>
        <text evidence="3">Optimum pH is 7.0.</text>
    </phDependence>
</comment>
<comment type="subcellular location">
    <subcellularLocation>
        <location>Nucleus</location>
    </subcellularLocation>
</comment>
<comment type="alternative products">
    <event type="alternative splicing"/>
    <isoform>
        <id>Q64J17-1</id>
        <name>1</name>
        <sequence type="displayed"/>
    </isoform>
    <isoform>
        <id>Q64J17-2</id>
        <name>2</name>
        <sequence type="described" ref="VSP_054320"/>
    </isoform>
    <isoform>
        <id>Q64J17-3</id>
        <name>3</name>
        <sequence type="described" ref="VSP_054319"/>
    </isoform>
</comment>
<comment type="tissue specificity">
    <text evidence="2">Expressed in rosette leaves, stems, cauline leaves, flowers and developing seeds.</text>
</comment>
<comment type="induction">
    <text evidence="2">By abscisic acid (ABA), drought and salt stress.</text>
</comment>
<comment type="miscellaneous">
    <molecule>Isoform 2</molecule>
    <text evidence="5">May be due to a competing acceptor splice site.</text>
</comment>
<comment type="similarity">
    <text evidence="5">Belongs to the methyltransferase superfamily. L-isoaspartyl/D-aspartyl protein methyltransferase family.</text>
</comment>
<comment type="sequence caution" evidence="5">
    <conflict type="erroneous gene model prediction">
        <sequence resource="EMBL-CDS" id="BAB09395"/>
    </conflict>
</comment>
<keyword id="KW-0025">Alternative splicing</keyword>
<keyword id="KW-0489">Methyltransferase</keyword>
<keyword id="KW-0539">Nucleus</keyword>
<keyword id="KW-1185">Reference proteome</keyword>
<keyword id="KW-0949">S-adenosyl-L-methionine</keyword>
<keyword id="KW-0808">Transferase</keyword>
<dbReference type="EC" id="2.1.1.77"/>
<dbReference type="EMBL" id="AY496702">
    <property type="protein sequence ID" value="AAR97903.1"/>
    <property type="molecule type" value="Genomic_DNA"/>
</dbReference>
<dbReference type="EMBL" id="AY496702">
    <property type="protein sequence ID" value="AAR97904.1"/>
    <property type="molecule type" value="Genomic_DNA"/>
</dbReference>
<dbReference type="EMBL" id="AY496702">
    <property type="protein sequence ID" value="ACL14906.1"/>
    <property type="molecule type" value="Genomic_DNA"/>
</dbReference>
<dbReference type="EMBL" id="AB024031">
    <property type="protein sequence ID" value="BAB09395.1"/>
    <property type="status" value="ALT_SEQ"/>
    <property type="molecule type" value="Genomic_DNA"/>
</dbReference>
<dbReference type="EMBL" id="CP002688">
    <property type="protein sequence ID" value="AED95915.1"/>
    <property type="molecule type" value="Genomic_DNA"/>
</dbReference>
<dbReference type="EMBL" id="CP002688">
    <property type="protein sequence ID" value="AED95916.1"/>
    <property type="molecule type" value="Genomic_DNA"/>
</dbReference>
<dbReference type="EMBL" id="AK118104">
    <property type="protein sequence ID" value="BAC42732.1"/>
    <property type="molecule type" value="mRNA"/>
</dbReference>
<dbReference type="RefSeq" id="NP_001078740.1">
    <molecule id="Q64J17-2"/>
    <property type="nucleotide sequence ID" value="NM_001085271.1"/>
</dbReference>
<dbReference type="RefSeq" id="NP_199835.2">
    <molecule id="Q64J17-1"/>
    <property type="nucleotide sequence ID" value="NM_124403.2"/>
</dbReference>
<dbReference type="SMR" id="Q64J17"/>
<dbReference type="FunCoup" id="Q64J17">
    <property type="interactions" value="1764"/>
</dbReference>
<dbReference type="STRING" id="3702.Q64J17"/>
<dbReference type="PaxDb" id="3702-AT5G50240.1"/>
<dbReference type="ProteomicsDB" id="226174">
    <molecule id="Q64J17-1"/>
</dbReference>
<dbReference type="EnsemblPlants" id="AT5G50240.1">
    <molecule id="Q64J17-1"/>
    <property type="protein sequence ID" value="AT5G50240.1"/>
    <property type="gene ID" value="AT5G50240"/>
</dbReference>
<dbReference type="EnsemblPlants" id="AT5G50240.2">
    <molecule id="Q64J17-2"/>
    <property type="protein sequence ID" value="AT5G50240.2"/>
    <property type="gene ID" value="AT5G50240"/>
</dbReference>
<dbReference type="GeneID" id="835089"/>
<dbReference type="Gramene" id="AT5G50240.1">
    <molecule id="Q64J17-1"/>
    <property type="protein sequence ID" value="AT5G50240.1"/>
    <property type="gene ID" value="AT5G50240"/>
</dbReference>
<dbReference type="Gramene" id="AT5G50240.2">
    <molecule id="Q64J17-2"/>
    <property type="protein sequence ID" value="AT5G50240.2"/>
    <property type="gene ID" value="AT5G50240"/>
</dbReference>
<dbReference type="KEGG" id="ath:AT5G50240"/>
<dbReference type="Araport" id="AT5G50240"/>
<dbReference type="TAIR" id="AT5G50240">
    <property type="gene designation" value="PIMT2"/>
</dbReference>
<dbReference type="eggNOG" id="KOG1661">
    <property type="taxonomic scope" value="Eukaryota"/>
</dbReference>
<dbReference type="InParanoid" id="Q64J17"/>
<dbReference type="PhylomeDB" id="Q64J17"/>
<dbReference type="BRENDA" id="2.1.1.77">
    <property type="organism ID" value="399"/>
</dbReference>
<dbReference type="PRO" id="PR:Q64J17"/>
<dbReference type="Proteomes" id="UP000006548">
    <property type="component" value="Chromosome 5"/>
</dbReference>
<dbReference type="ExpressionAtlas" id="Q64J17">
    <property type="expression patterns" value="baseline and differential"/>
</dbReference>
<dbReference type="GO" id="GO:0005634">
    <property type="term" value="C:nucleus"/>
    <property type="evidence" value="ECO:0000314"/>
    <property type="project" value="TAIR"/>
</dbReference>
<dbReference type="GO" id="GO:0004719">
    <property type="term" value="F:protein-L-isoaspartate (D-aspartate) O-methyltransferase activity"/>
    <property type="evidence" value="ECO:0000314"/>
    <property type="project" value="TAIR"/>
</dbReference>
<dbReference type="GO" id="GO:0032259">
    <property type="term" value="P:methylation"/>
    <property type="evidence" value="ECO:0007669"/>
    <property type="project" value="UniProtKB-KW"/>
</dbReference>
<dbReference type="GO" id="GO:0036211">
    <property type="term" value="P:protein modification process"/>
    <property type="evidence" value="ECO:0007669"/>
    <property type="project" value="InterPro"/>
</dbReference>
<dbReference type="GO" id="GO:0030091">
    <property type="term" value="P:protein repair"/>
    <property type="evidence" value="ECO:0000304"/>
    <property type="project" value="UniProtKB"/>
</dbReference>
<dbReference type="CDD" id="cd02440">
    <property type="entry name" value="AdoMet_MTases"/>
    <property type="match status" value="1"/>
</dbReference>
<dbReference type="FunFam" id="3.40.50.150:FF:000027">
    <property type="entry name" value="Protein-L-isoaspartate O-methyltransferase"/>
    <property type="match status" value="1"/>
</dbReference>
<dbReference type="Gene3D" id="3.40.50.150">
    <property type="entry name" value="Vaccinia Virus protein VP39"/>
    <property type="match status" value="1"/>
</dbReference>
<dbReference type="InterPro" id="IPR000682">
    <property type="entry name" value="PCMT"/>
</dbReference>
<dbReference type="InterPro" id="IPR029063">
    <property type="entry name" value="SAM-dependent_MTases_sf"/>
</dbReference>
<dbReference type="NCBIfam" id="TIGR00080">
    <property type="entry name" value="pimt"/>
    <property type="match status" value="1"/>
</dbReference>
<dbReference type="PANTHER" id="PTHR11579">
    <property type="entry name" value="PROTEIN-L-ISOASPARTATE O-METHYLTRANSFERASE"/>
    <property type="match status" value="1"/>
</dbReference>
<dbReference type="PANTHER" id="PTHR11579:SF20">
    <property type="entry name" value="PROTEIN-L-ISOASPARTATE O-METHYLTRANSFERASE 2"/>
    <property type="match status" value="1"/>
</dbReference>
<dbReference type="Pfam" id="PF01135">
    <property type="entry name" value="PCMT"/>
    <property type="match status" value="1"/>
</dbReference>
<dbReference type="SUPFAM" id="SSF53335">
    <property type="entry name" value="S-adenosyl-L-methionine-dependent methyltransferases"/>
    <property type="match status" value="1"/>
</dbReference>
<dbReference type="PROSITE" id="PS01279">
    <property type="entry name" value="PCMT"/>
    <property type="match status" value="1"/>
</dbReference>
<protein>
    <recommendedName>
        <fullName>Protein-L-isoaspartate O-methyltransferase 2</fullName>
        <shortName>AtPIMT2</shortName>
        <ecNumber>2.1.1.77</ecNumber>
    </recommendedName>
</protein>
<name>PIMT2_ARATH</name>
<reference key="1">
    <citation type="journal article" date="2004" name="Plant Physiol.">
        <title>A second protein L-isoaspartyl methyltransferase gene in Arabidopsis produces two transcripts whose products are sequestered in the nucleus.</title>
        <authorList>
            <person name="Xu Q."/>
            <person name="Belcastro M.P."/>
            <person name="Villa S.T."/>
            <person name="Dinkins R.D."/>
            <person name="Clarke S.G."/>
            <person name="Downie A.B."/>
        </authorList>
    </citation>
    <scope>NUCLEOTIDE SEQUENCE [GENOMIC DNA]</scope>
    <scope>ALTERNATIVE SPLICING</scope>
    <scope>FUNCTION</scope>
    <scope>CATALYTIC ACTIVITY</scope>
    <scope>TISSUE SPECIFICITY</scope>
    <scope>INDUCTION</scope>
    <scope>MUTAGENESIS OF 23-LYS-LYS-24</scope>
    <source>
        <strain>cv. Wassilewskija</strain>
    </source>
</reference>
<reference key="2">
    <citation type="journal article" date="2000" name="DNA Res.">
        <title>Structural analysis of Arabidopsis thaliana chromosome 5. X. Sequence features of the regions of 3,076,755 bp covered by sixty P1 and TAC clones.</title>
        <authorList>
            <person name="Sato S."/>
            <person name="Nakamura Y."/>
            <person name="Kaneko T."/>
            <person name="Katoh T."/>
            <person name="Asamizu E."/>
            <person name="Kotani H."/>
            <person name="Tabata S."/>
        </authorList>
    </citation>
    <scope>NUCLEOTIDE SEQUENCE [LARGE SCALE GENOMIC DNA]</scope>
    <source>
        <strain>cv. Columbia</strain>
    </source>
</reference>
<reference key="3">
    <citation type="journal article" date="2017" name="Plant J.">
        <title>Araport11: a complete reannotation of the Arabidopsis thaliana reference genome.</title>
        <authorList>
            <person name="Cheng C.Y."/>
            <person name="Krishnakumar V."/>
            <person name="Chan A.P."/>
            <person name="Thibaud-Nissen F."/>
            <person name="Schobel S."/>
            <person name="Town C.D."/>
        </authorList>
    </citation>
    <scope>GENOME REANNOTATION</scope>
    <source>
        <strain>cv. Columbia</strain>
    </source>
</reference>
<reference key="4">
    <citation type="journal article" date="2002" name="Science">
        <title>Functional annotation of a full-length Arabidopsis cDNA collection.</title>
        <authorList>
            <person name="Seki M."/>
            <person name="Narusaka M."/>
            <person name="Kamiya A."/>
            <person name="Ishida J."/>
            <person name="Satou M."/>
            <person name="Sakurai T."/>
            <person name="Nakajima M."/>
            <person name="Enju A."/>
            <person name="Akiyama K."/>
            <person name="Oono Y."/>
            <person name="Muramatsu M."/>
            <person name="Hayashizaki Y."/>
            <person name="Kawai J."/>
            <person name="Carninci P."/>
            <person name="Itoh M."/>
            <person name="Ishii Y."/>
            <person name="Arakawa T."/>
            <person name="Shibata K."/>
            <person name="Shinagawa A."/>
            <person name="Shinozaki K."/>
        </authorList>
    </citation>
    <scope>NUCLEOTIDE SEQUENCE [LARGE SCALE MRNA] (ISOFORM 3)</scope>
    <source>
        <strain>cv. Columbia</strain>
    </source>
</reference>
<reference key="5">
    <citation type="journal article" date="2006" name="Physiol. Plantarum">
        <title>Arabidopsis protein repair L-isoaspartyl methyltransferases: predominant activities at lethal temperatures.</title>
        <authorList>
            <person name="Villa S.T."/>
            <person name="Xu Q."/>
            <person name="Downie A.B."/>
            <person name="Clarke S.G."/>
        </authorList>
    </citation>
    <scope>FUNCTION</scope>
    <scope>BIOPHYSICOCHEMICAL PROPERTIES</scope>
</reference>
<accession>Q64J17</accession>
<accession>Q64J16</accession>
<accession>Q8GXQ4</accession>
<accession>Q9FGS1</accession>
<evidence type="ECO:0000250" key="1"/>
<evidence type="ECO:0000269" key="2">
    <source>
    </source>
</evidence>
<evidence type="ECO:0000269" key="3">
    <source>
    </source>
</evidence>
<evidence type="ECO:0000303" key="4">
    <source>
    </source>
</evidence>
<evidence type="ECO:0000305" key="5"/>
<organism>
    <name type="scientific">Arabidopsis thaliana</name>
    <name type="common">Mouse-ear cress</name>
    <dbReference type="NCBI Taxonomy" id="3702"/>
    <lineage>
        <taxon>Eukaryota</taxon>
        <taxon>Viridiplantae</taxon>
        <taxon>Streptophyta</taxon>
        <taxon>Embryophyta</taxon>
        <taxon>Tracheophyta</taxon>
        <taxon>Spermatophyta</taxon>
        <taxon>Magnoliopsida</taxon>
        <taxon>eudicotyledons</taxon>
        <taxon>Gunneridae</taxon>
        <taxon>Pentapetalae</taxon>
        <taxon>rosids</taxon>
        <taxon>malvids</taxon>
        <taxon>Brassicales</taxon>
        <taxon>Brassicaceae</taxon>
        <taxon>Camelineae</taxon>
        <taxon>Arabidopsis</taxon>
    </lineage>
</organism>
<gene>
    <name type="primary">PIMT2</name>
    <name type="ordered locus">At5g50240</name>
    <name type="ORF">K6A12.10</name>
</gene>
<proteinExistence type="evidence at protein level"/>
<sequence>MNTNTQTEQQIIREETRIDKIIKKRKKKMRAQVLLCPTITAYGRLYCAPRRLHRYNSSSSSSQFLNLNLSRFSGALFFHMEQFQSGTGSSGKRGMVENLKRYGVISSKRVAQVMEALDRGLFVPVGSSAYVDTPVPIGYNATISAPHMHATCLQLLEDKLHPGMRALDVGSGTGYLTGCFALMVGAEGRVVGVDHIPELVDMSIKNIEKSVAASFLKKGSLSLHVGDGRKGWQEFAPYDAIHVGAAASEIPQPLLDQLKPGGRMVIPLGTYFQELKVIDKNEDGSIKVHTETSVRYVPLTSRVEQLGGF</sequence>
<feature type="chain" id="PRO_0000428878" description="Protein-L-isoaspartate O-methyltransferase 2">
    <location>
        <begin position="1"/>
        <end position="309"/>
    </location>
</feature>
<feature type="short sequence motif" description="Nuclear localization signal" evidence="5">
    <location>
        <begin position="23"/>
        <end position="28"/>
    </location>
</feature>
<feature type="active site" evidence="1">
    <location>
        <position position="144"/>
    </location>
</feature>
<feature type="splice variant" id="VSP_054319" description="In isoform 3." evidence="4">
    <original>MNTNTQTEQQIIREETRIDKIIKKRKKKMRAQVLLCPTITAYGRLYCAPRRLHRYNSSSSSSQFLNLNLSRFSGALFFHMEQFQ</original>
    <variation>ME</variation>
    <location>
        <begin position="1"/>
        <end position="84"/>
    </location>
</feature>
<feature type="splice variant" id="VSP_054320" description="In isoform 2." evidence="5">
    <location>
        <begin position="82"/>
        <end position="84"/>
    </location>
</feature>
<feature type="mutagenesis site" description="Loss of nuclear targeting." evidence="2">
    <original>KK</original>
    <variation>RR</variation>
    <location>
        <begin position="23"/>
        <end position="24"/>
    </location>
</feature>